<organismHost>
    <name type="scientific">Lilium formosanum</name>
    <dbReference type="NCBI Taxonomy" id="63788"/>
</organismHost>
<dbReference type="EMBL" id="X15342">
    <property type="protein sequence ID" value="CAA33394.1"/>
    <property type="molecule type" value="Genomic_RNA"/>
</dbReference>
<dbReference type="GO" id="GO:0030430">
    <property type="term" value="C:host cell cytoplasm"/>
    <property type="evidence" value="ECO:0007669"/>
    <property type="project" value="UniProtKB-SubCell"/>
</dbReference>
<dbReference type="GO" id="GO:0005524">
    <property type="term" value="F:ATP binding"/>
    <property type="evidence" value="ECO:0007669"/>
    <property type="project" value="InterPro"/>
</dbReference>
<dbReference type="GO" id="GO:0003723">
    <property type="term" value="F:RNA binding"/>
    <property type="evidence" value="ECO:0007669"/>
    <property type="project" value="UniProtKB-KW"/>
</dbReference>
<dbReference type="GO" id="GO:0052170">
    <property type="term" value="P:symbiont-mediated suppression of host innate immune response"/>
    <property type="evidence" value="ECO:0007669"/>
    <property type="project" value="UniProtKB-KW"/>
</dbReference>
<dbReference type="GO" id="GO:0046740">
    <property type="term" value="P:transport of virus in host, cell to cell"/>
    <property type="evidence" value="ECO:0007669"/>
    <property type="project" value="UniProtKB-KW"/>
</dbReference>
<dbReference type="InterPro" id="IPR027351">
    <property type="entry name" value="(+)RNA_virus_helicase_core_dom"/>
</dbReference>
<dbReference type="Pfam" id="PF01443">
    <property type="entry name" value="Viral_helicase1"/>
    <property type="match status" value="1"/>
</dbReference>
<dbReference type="PROSITE" id="PS51657">
    <property type="entry name" value="PSRV_HELICASE"/>
    <property type="match status" value="1"/>
</dbReference>
<reference key="1">
    <citation type="journal article" date="1990" name="J. Gen. Virol.">
        <title>Homologies between the genomes of a carlavirus (lily symptomless virus) and a potexvirus (lily virus X) from lily plants.</title>
        <authorList>
            <person name="Memelink J."/>
            <person name="van der Vlugt C.I.M."/>
            <person name="Linthorst H.J.M."/>
            <person name="Derks A.F.L.M."/>
            <person name="Asjes C.J."/>
            <person name="Bol J.F."/>
        </authorList>
    </citation>
    <scope>NUCLEOTIDE SEQUENCE [GENOMIC RNA]</scope>
</reference>
<reference key="2">
    <citation type="journal article" date="2005" name="Mol. Plant Microbe Interact.">
        <title>A new cell-to-cell transport model for Potexviruses.</title>
        <authorList>
            <person name="Verchot-Lubicz J."/>
        </authorList>
    </citation>
    <scope>REVIEW</scope>
</reference>
<comment type="function">
    <text evidence="1">Transports viral genome to neighboring plant cells directly through plasmosdesmata, without any budding. The movement protein allows efficient cell to cell propagation, by bypassing the host cell wall barrier. Increases plasmodesma size exclusion limit. Acts as a suppressor of RNA-mediated gene silencing, also known as post-transcriptional gene silencing (PTGS), a mechanism of plant viral defense that limits the accumulation of viral RNAs (By similarity).</text>
</comment>
<comment type="subunit">
    <text evidence="1">Homodimer and homooligomer. Interacts with capsid protein. Interacts with host AGO1; this interaction targets the host protein for degradation, thereby suppressing the antiviral RNA silencing (By similarity).</text>
</comment>
<comment type="subcellular location">
    <subcellularLocation>
        <location evidence="1">Host cytoplasm</location>
    </subcellularLocation>
</comment>
<comment type="miscellaneous">
    <text>TGBp1, TGBp2 and TGBp3 seem to act together for cell-to-cell propagation. TGBp1 is the main movement protein that physically cross the plasmodesma with the viral genome. TGBp2 and TGBp3 would facilitate TGBp1 function.</text>
</comment>
<comment type="similarity">
    <text evidence="2">Belongs to the Tymovirales TGBp1 protein family.</text>
</comment>
<name>TGB1_LVX</name>
<organism>
    <name type="scientific">Lily virus X</name>
    <dbReference type="NCBI Taxonomy" id="12194"/>
    <lineage>
        <taxon>Viruses</taxon>
        <taxon>Riboviria</taxon>
        <taxon>Orthornavirae</taxon>
        <taxon>Kitrinoviricota</taxon>
        <taxon>Alsuviricetes</taxon>
        <taxon>Tymovirales</taxon>
        <taxon>Alphaflexiviridae</taxon>
        <taxon>Potexvirus</taxon>
    </lineage>
</organism>
<proteinExistence type="inferred from homology"/>
<sequence>MEFCGGTLRTRFQRTSVPNSPVTVVHTVAGSGKTTFIRNLLIDHPQLVARTYGTPDVPNLLGYGIRDRHGDAHIVDEYPAADLRSHPSVSIVFADPLQHHGEVRPAHFTCSHTHRFGKSTCSLLGTLGVYCTSDKEDSVTFAGAYLAEPVGTLIALGEDAELVLDNHRVEYFTPCQALGLTFPSVTLLTDAPIEDQPPVSRYIALTRHTDSLLILN</sequence>
<keyword id="KW-1035">Host cytoplasm</keyword>
<keyword id="KW-0945">Host-virus interaction</keyword>
<keyword id="KW-1090">Inhibition of host innate immune response by virus</keyword>
<keyword id="KW-0694">RNA-binding</keyword>
<keyword id="KW-0941">Suppressor of RNA silencing</keyword>
<keyword id="KW-0813">Transport</keyword>
<keyword id="KW-0899">Viral immunoevasion</keyword>
<keyword id="KW-0916">Viral movement protein</keyword>
<feature type="chain" id="PRO_0000222566" description="Movement and silencing protein TGBp1">
    <location>
        <begin position="1"/>
        <end position="216"/>
    </location>
</feature>
<feature type="domain" description="(+)RNA virus helicase ATP-binding">
    <location>
        <begin position="1"/>
        <end position="110"/>
    </location>
</feature>
<feature type="domain" description="(+)RNA virus helicase C-terminal">
    <location>
        <begin position="111"/>
        <end position="216"/>
    </location>
</feature>
<protein>
    <recommendedName>
        <fullName>Movement and silencing protein TGBp1</fullName>
    </recommendedName>
    <alternativeName>
        <fullName>25 kDa protein</fullName>
    </alternativeName>
    <alternativeName>
        <fullName>Silencing suppressor P25</fullName>
    </alternativeName>
    <alternativeName>
        <fullName>Triple gene block 1 protein</fullName>
        <shortName>TGBp1</shortName>
    </alternativeName>
</protein>
<evidence type="ECO:0000250" key="1"/>
<evidence type="ECO:0000305" key="2"/>
<accession>P27329</accession>
<gene>
    <name type="ORF">ORF2</name>
</gene>